<accession>O94888</accession>
<accession>D3DXB3</accession>
<accession>Q6ZP77</accession>
<accession>Q86X20</accession>
<accession>Q8N327</accession>
<gene>
    <name type="primary">UBXN7</name>
    <name type="synonym">KIAA0794</name>
    <name type="synonym">UBXD7</name>
</gene>
<protein>
    <recommendedName>
        <fullName>UBX domain-containing protein 7</fullName>
    </recommendedName>
</protein>
<organism>
    <name type="scientific">Homo sapiens</name>
    <name type="common">Human</name>
    <dbReference type="NCBI Taxonomy" id="9606"/>
    <lineage>
        <taxon>Eukaryota</taxon>
        <taxon>Metazoa</taxon>
        <taxon>Chordata</taxon>
        <taxon>Craniata</taxon>
        <taxon>Vertebrata</taxon>
        <taxon>Euteleostomi</taxon>
        <taxon>Mammalia</taxon>
        <taxon>Eutheria</taxon>
        <taxon>Euarchontoglires</taxon>
        <taxon>Primates</taxon>
        <taxon>Haplorrhini</taxon>
        <taxon>Catarrhini</taxon>
        <taxon>Hominidae</taxon>
        <taxon>Homo</taxon>
    </lineage>
</organism>
<evidence type="ECO:0000255" key="1">
    <source>
        <dbReference type="PROSITE-ProRule" id="PRU00215"/>
    </source>
</evidence>
<evidence type="ECO:0000256" key="2">
    <source>
        <dbReference type="SAM" id="MobiDB-lite"/>
    </source>
</evidence>
<evidence type="ECO:0000269" key="3">
    <source>
    </source>
</evidence>
<evidence type="ECO:0000305" key="4"/>
<evidence type="ECO:0007744" key="5">
    <source>
    </source>
</evidence>
<evidence type="ECO:0007744" key="6">
    <source>
    </source>
</evidence>
<evidence type="ECO:0007744" key="7">
    <source>
    </source>
</evidence>
<evidence type="ECO:0007744" key="8">
    <source>
    </source>
</evidence>
<evidence type="ECO:0007744" key="9">
    <source>
    </source>
</evidence>
<evidence type="ECO:0007744" key="10">
    <source>
    </source>
</evidence>
<evidence type="ECO:0007744" key="11">
    <source>
    </source>
</evidence>
<evidence type="ECO:0007744" key="12">
    <source>
    </source>
</evidence>
<evidence type="ECO:0007744" key="13">
    <source>
    </source>
</evidence>
<evidence type="ECO:0007829" key="14">
    <source>
        <dbReference type="PDB" id="1WJ4"/>
    </source>
</evidence>
<evidence type="ECO:0007829" key="15">
    <source>
        <dbReference type="PDB" id="2DAL"/>
    </source>
</evidence>
<evidence type="ECO:0007829" key="16">
    <source>
        <dbReference type="PDB" id="2DLX"/>
    </source>
</evidence>
<evidence type="ECO:0007829" key="17">
    <source>
        <dbReference type="PDB" id="5X3P"/>
    </source>
</evidence>
<keyword id="KW-0002">3D-structure</keyword>
<keyword id="KW-0007">Acetylation</keyword>
<keyword id="KW-1017">Isopeptide bond</keyword>
<keyword id="KW-0539">Nucleus</keyword>
<keyword id="KW-0597">Phosphoprotein</keyword>
<keyword id="KW-1267">Proteomics identification</keyword>
<keyword id="KW-1185">Reference proteome</keyword>
<keyword id="KW-0832">Ubl conjugation</keyword>
<sequence>MAAHGGSAASSALKGLIQQFTTITGASESVGKHMLEACNNNLEMAVTMFLDGGGIAEEPSTSSASVSTVRPHTEEEVRAPIPQKQEILVEPEPLFGAPKRRRPARSIFDGFRDFQTETIRQEQELRNGGAIDKKLTTLADLFRPPIDLMHKGSFETAKECGQMQNKWLMINIQNVQDFACQCLNRDVWSNEAVKNIIREHFIFWQVYHDSEEGQRYIQFYKLGDFPYVSILDPRTGQKLVEWHQLDVSSFLDQVTGFLGEHGQLDGLSSSPPKKCARSESLIDASEDSQLEAAIRASLQETHFDSTQTKQDSRSDEESESELFSGSEEFISVCGSDEEEEVENLAKSRKSPHKDLGHRKEENRRPLTEPPVRTDPGTATNHQGLPAVDSEILEMPPEKADGVVEGIDVNGPKAQLMLRYPDGKREQITLPEQAKLLALVKHVQSKGYPNERFELLTNFPRRKLSHLDYDITLQEAGLCPQETVFVQERN</sequence>
<dbReference type="EMBL" id="AB018337">
    <property type="protein sequence ID" value="BAA34514.1"/>
    <property type="status" value="ALT_INIT"/>
    <property type="molecule type" value="mRNA"/>
</dbReference>
<dbReference type="EMBL" id="AK129880">
    <property type="protein sequence ID" value="BAC85247.1"/>
    <property type="status" value="ALT_SEQ"/>
    <property type="molecule type" value="mRNA"/>
</dbReference>
<dbReference type="EMBL" id="CH471191">
    <property type="protein sequence ID" value="EAW53652.1"/>
    <property type="molecule type" value="Genomic_DNA"/>
</dbReference>
<dbReference type="EMBL" id="CH471191">
    <property type="protein sequence ID" value="EAW53654.1"/>
    <property type="molecule type" value="Genomic_DNA"/>
</dbReference>
<dbReference type="EMBL" id="BC028986">
    <property type="protein sequence ID" value="AAH28986.1"/>
    <property type="molecule type" value="mRNA"/>
</dbReference>
<dbReference type="CCDS" id="CCDS43191.1"/>
<dbReference type="RefSeq" id="NP_056377.1">
    <property type="nucleotide sequence ID" value="NM_015562.2"/>
</dbReference>
<dbReference type="PDB" id="1WJ4">
    <property type="method" value="NMR"/>
    <property type="chains" value="A=377-487"/>
</dbReference>
<dbReference type="PDB" id="2DAL">
    <property type="method" value="NMR"/>
    <property type="chains" value="A=6-54"/>
</dbReference>
<dbReference type="PDB" id="2DLX">
    <property type="method" value="NMR"/>
    <property type="chains" value="A=131-270"/>
</dbReference>
<dbReference type="PDB" id="5X3P">
    <property type="method" value="X-ray"/>
    <property type="resolution" value="2.00 A"/>
    <property type="chains" value="A/B/C=410-489"/>
</dbReference>
<dbReference type="PDB" id="5X4L">
    <property type="method" value="X-ray"/>
    <property type="resolution" value="2.40 A"/>
    <property type="chains" value="C/D=410-489"/>
</dbReference>
<dbReference type="PDBsum" id="1WJ4"/>
<dbReference type="PDBsum" id="2DAL"/>
<dbReference type="PDBsum" id="2DLX"/>
<dbReference type="PDBsum" id="5X3P"/>
<dbReference type="PDBsum" id="5X4L"/>
<dbReference type="SMR" id="O94888"/>
<dbReference type="BioGRID" id="117507">
    <property type="interactions" value="275"/>
</dbReference>
<dbReference type="ComplexPortal" id="CPX-8101">
    <property type="entry name" value="VCP-NPL4-UFD1-UBXN7 AAA ATPase complex"/>
</dbReference>
<dbReference type="DIP" id="DIP-47029N"/>
<dbReference type="FunCoup" id="O94888">
    <property type="interactions" value="4529"/>
</dbReference>
<dbReference type="IntAct" id="O94888">
    <property type="interactions" value="81"/>
</dbReference>
<dbReference type="STRING" id="9606.ENSP00000296328"/>
<dbReference type="GlyGen" id="O94888">
    <property type="glycosylation" value="1 site, 1 O-linked glycan (1 site)"/>
</dbReference>
<dbReference type="iPTMnet" id="O94888"/>
<dbReference type="MetOSite" id="O94888"/>
<dbReference type="PhosphoSitePlus" id="O94888"/>
<dbReference type="BioMuta" id="UBXN7"/>
<dbReference type="jPOST" id="O94888"/>
<dbReference type="MassIVE" id="O94888"/>
<dbReference type="PaxDb" id="9606-ENSP00000296328"/>
<dbReference type="PeptideAtlas" id="O94888"/>
<dbReference type="ProteomicsDB" id="50526"/>
<dbReference type="Pumba" id="O94888"/>
<dbReference type="Antibodypedia" id="66084">
    <property type="antibodies" value="32 antibodies from 11 providers"/>
</dbReference>
<dbReference type="DNASU" id="26043"/>
<dbReference type="Ensembl" id="ENST00000296328.9">
    <property type="protein sequence ID" value="ENSP00000296328.4"/>
    <property type="gene ID" value="ENSG00000163960.13"/>
</dbReference>
<dbReference type="GeneID" id="26043"/>
<dbReference type="KEGG" id="hsa:26043"/>
<dbReference type="MANE-Select" id="ENST00000296328.9">
    <property type="protein sequence ID" value="ENSP00000296328.4"/>
    <property type="RefSeq nucleotide sequence ID" value="NM_015562.2"/>
    <property type="RefSeq protein sequence ID" value="NP_056377.1"/>
</dbReference>
<dbReference type="UCSC" id="uc003fwm.5">
    <property type="organism name" value="human"/>
</dbReference>
<dbReference type="AGR" id="HGNC:29119"/>
<dbReference type="CTD" id="26043"/>
<dbReference type="DisGeNET" id="26043"/>
<dbReference type="GeneCards" id="UBXN7"/>
<dbReference type="HGNC" id="HGNC:29119">
    <property type="gene designation" value="UBXN7"/>
</dbReference>
<dbReference type="HPA" id="ENSG00000163960">
    <property type="expression patterns" value="Low tissue specificity"/>
</dbReference>
<dbReference type="MIM" id="616379">
    <property type="type" value="gene"/>
</dbReference>
<dbReference type="neXtProt" id="NX_O94888"/>
<dbReference type="OpenTargets" id="ENSG00000163960"/>
<dbReference type="PharmGKB" id="PA162408447"/>
<dbReference type="VEuPathDB" id="HostDB:ENSG00000163960"/>
<dbReference type="eggNOG" id="KOG0260">
    <property type="taxonomic scope" value="Eukaryota"/>
</dbReference>
<dbReference type="eggNOG" id="KOG1364">
    <property type="taxonomic scope" value="Eukaryota"/>
</dbReference>
<dbReference type="GeneTree" id="ENSGT00390000018687"/>
<dbReference type="HOGENOM" id="CLU_021255_3_0_1"/>
<dbReference type="InParanoid" id="O94888"/>
<dbReference type="OMA" id="CAFPRKS"/>
<dbReference type="OrthoDB" id="270602at2759"/>
<dbReference type="PAN-GO" id="O94888">
    <property type="GO annotations" value="3 GO annotations based on evolutionary models"/>
</dbReference>
<dbReference type="PhylomeDB" id="O94888"/>
<dbReference type="TreeFam" id="TF323635"/>
<dbReference type="PathwayCommons" id="O94888"/>
<dbReference type="Reactome" id="R-HSA-8951664">
    <property type="pathway name" value="Neddylation"/>
</dbReference>
<dbReference type="Reactome" id="R-HSA-9755511">
    <property type="pathway name" value="KEAP1-NFE2L2 pathway"/>
</dbReference>
<dbReference type="SignaLink" id="O94888"/>
<dbReference type="BioGRID-ORCS" id="26043">
    <property type="hits" value="15 hits in 1172 CRISPR screens"/>
</dbReference>
<dbReference type="ChiTaRS" id="UBXN7">
    <property type="organism name" value="human"/>
</dbReference>
<dbReference type="EvolutionaryTrace" id="O94888"/>
<dbReference type="GenomeRNAi" id="26043"/>
<dbReference type="Pharos" id="O94888">
    <property type="development level" value="Tbio"/>
</dbReference>
<dbReference type="PRO" id="PR:O94888"/>
<dbReference type="Proteomes" id="UP000005640">
    <property type="component" value="Chromosome 3"/>
</dbReference>
<dbReference type="RNAct" id="O94888">
    <property type="molecule type" value="protein"/>
</dbReference>
<dbReference type="Bgee" id="ENSG00000163960">
    <property type="expression patterns" value="Expressed in endometrium epithelium and 204 other cell types or tissues"/>
</dbReference>
<dbReference type="ExpressionAtlas" id="O94888">
    <property type="expression patterns" value="baseline and differential"/>
</dbReference>
<dbReference type="GO" id="GO:0005829">
    <property type="term" value="C:cytosol"/>
    <property type="evidence" value="ECO:0000304"/>
    <property type="project" value="Reactome"/>
</dbReference>
<dbReference type="GO" id="GO:0005654">
    <property type="term" value="C:nucleoplasm"/>
    <property type="evidence" value="ECO:0000314"/>
    <property type="project" value="HPA"/>
</dbReference>
<dbReference type="GO" id="GO:0005634">
    <property type="term" value="C:nucleus"/>
    <property type="evidence" value="ECO:0000318"/>
    <property type="project" value="GO_Central"/>
</dbReference>
<dbReference type="GO" id="GO:0034098">
    <property type="term" value="C:VCP-NPL4-UFD1 AAA ATPase complex"/>
    <property type="evidence" value="ECO:0000314"/>
    <property type="project" value="BHF-UCL"/>
</dbReference>
<dbReference type="GO" id="GO:0061629">
    <property type="term" value="F:RNA polymerase II-specific DNA-binding transcription factor binding"/>
    <property type="evidence" value="ECO:0000353"/>
    <property type="project" value="BHF-UCL"/>
</dbReference>
<dbReference type="GO" id="GO:0043130">
    <property type="term" value="F:ubiquitin binding"/>
    <property type="evidence" value="ECO:0000314"/>
    <property type="project" value="BHF-UCL"/>
</dbReference>
<dbReference type="GO" id="GO:0031625">
    <property type="term" value="F:ubiquitin protein ligase binding"/>
    <property type="evidence" value="ECO:0000314"/>
    <property type="project" value="BHF-UCL"/>
</dbReference>
<dbReference type="GO" id="GO:0043161">
    <property type="term" value="P:proteasome-mediated ubiquitin-dependent protein catabolic process"/>
    <property type="evidence" value="ECO:0000318"/>
    <property type="project" value="GO_Central"/>
</dbReference>
<dbReference type="CDD" id="cd02958">
    <property type="entry name" value="UAS"/>
    <property type="match status" value="1"/>
</dbReference>
<dbReference type="CDD" id="cd14345">
    <property type="entry name" value="UBA_UBXD7"/>
    <property type="match status" value="1"/>
</dbReference>
<dbReference type="CDD" id="cd01773">
    <property type="entry name" value="UBX_UBXN7"/>
    <property type="match status" value="1"/>
</dbReference>
<dbReference type="FunFam" id="3.10.20.90:FF:000097">
    <property type="entry name" value="UBX domain-containing protein 7"/>
    <property type="match status" value="1"/>
</dbReference>
<dbReference type="FunFam" id="3.40.30.10:FF:000079">
    <property type="entry name" value="UBX domain-containing protein 7"/>
    <property type="match status" value="1"/>
</dbReference>
<dbReference type="Gene3D" id="1.10.8.10">
    <property type="entry name" value="DNA helicase RuvA subunit, C-terminal domain"/>
    <property type="match status" value="1"/>
</dbReference>
<dbReference type="Gene3D" id="3.40.30.10">
    <property type="entry name" value="Glutaredoxin"/>
    <property type="match status" value="1"/>
</dbReference>
<dbReference type="Gene3D" id="3.10.20.90">
    <property type="entry name" value="Phosphatidylinositol 3-kinase Catalytic Subunit, Chain A, domain 1"/>
    <property type="match status" value="1"/>
</dbReference>
<dbReference type="InterPro" id="IPR036249">
    <property type="entry name" value="Thioredoxin-like_sf"/>
</dbReference>
<dbReference type="InterPro" id="IPR006577">
    <property type="entry name" value="UAS"/>
</dbReference>
<dbReference type="InterPro" id="IPR009060">
    <property type="entry name" value="UBA-like_sf"/>
</dbReference>
<dbReference type="InterPro" id="IPR054109">
    <property type="entry name" value="UBA_8"/>
</dbReference>
<dbReference type="InterPro" id="IPR029071">
    <property type="entry name" value="Ubiquitin-like_domsf"/>
</dbReference>
<dbReference type="InterPro" id="IPR017346">
    <property type="entry name" value="UBX_7/2"/>
</dbReference>
<dbReference type="InterPro" id="IPR001012">
    <property type="entry name" value="UBX_dom"/>
</dbReference>
<dbReference type="InterPro" id="IPR050730">
    <property type="entry name" value="UBX_domain-protein"/>
</dbReference>
<dbReference type="PANTHER" id="PTHR23322">
    <property type="entry name" value="FAS-ASSOCIATED PROTEIN"/>
    <property type="match status" value="1"/>
</dbReference>
<dbReference type="PANTHER" id="PTHR23322:SF6">
    <property type="entry name" value="UBX DOMAIN-CONTAINING PROTEIN 7"/>
    <property type="match status" value="1"/>
</dbReference>
<dbReference type="Pfam" id="PF13899">
    <property type="entry name" value="Thioredoxin_7"/>
    <property type="match status" value="1"/>
</dbReference>
<dbReference type="Pfam" id="PF22566">
    <property type="entry name" value="UBA_8"/>
    <property type="match status" value="1"/>
</dbReference>
<dbReference type="Pfam" id="PF00789">
    <property type="entry name" value="UBX"/>
    <property type="match status" value="1"/>
</dbReference>
<dbReference type="PIRSF" id="PIRSF037991">
    <property type="entry name" value="UCP037991_UBX7/2"/>
    <property type="match status" value="1"/>
</dbReference>
<dbReference type="SMART" id="SM00594">
    <property type="entry name" value="UAS"/>
    <property type="match status" value="1"/>
</dbReference>
<dbReference type="SMART" id="SM00166">
    <property type="entry name" value="UBX"/>
    <property type="match status" value="1"/>
</dbReference>
<dbReference type="SUPFAM" id="SSF52833">
    <property type="entry name" value="Thioredoxin-like"/>
    <property type="match status" value="1"/>
</dbReference>
<dbReference type="SUPFAM" id="SSF46934">
    <property type="entry name" value="UBA-like"/>
    <property type="match status" value="1"/>
</dbReference>
<dbReference type="SUPFAM" id="SSF54236">
    <property type="entry name" value="Ubiquitin-like"/>
    <property type="match status" value="1"/>
</dbReference>
<dbReference type="PROSITE" id="PS50033">
    <property type="entry name" value="UBX"/>
    <property type="match status" value="1"/>
</dbReference>
<name>UBXN7_HUMAN</name>
<reference key="1">
    <citation type="journal article" date="1998" name="DNA Res.">
        <title>Prediction of the coding sequences of unidentified human genes. XI. The complete sequences of 100 new cDNA clones from brain which code for large proteins in vitro.</title>
        <authorList>
            <person name="Nagase T."/>
            <person name="Ishikawa K."/>
            <person name="Suyama M."/>
            <person name="Kikuno R."/>
            <person name="Miyajima N."/>
            <person name="Tanaka A."/>
            <person name="Kotani H."/>
            <person name="Nomura N."/>
            <person name="Ohara O."/>
        </authorList>
    </citation>
    <scope>NUCLEOTIDE SEQUENCE [LARGE SCALE MRNA]</scope>
    <source>
        <tissue>Brain</tissue>
    </source>
</reference>
<reference key="2">
    <citation type="journal article" date="2004" name="Nat. Genet.">
        <title>Complete sequencing and characterization of 21,243 full-length human cDNAs.</title>
        <authorList>
            <person name="Ota T."/>
            <person name="Suzuki Y."/>
            <person name="Nishikawa T."/>
            <person name="Otsuki T."/>
            <person name="Sugiyama T."/>
            <person name="Irie R."/>
            <person name="Wakamatsu A."/>
            <person name="Hayashi K."/>
            <person name="Sato H."/>
            <person name="Nagai K."/>
            <person name="Kimura K."/>
            <person name="Makita H."/>
            <person name="Sekine M."/>
            <person name="Obayashi M."/>
            <person name="Nishi T."/>
            <person name="Shibahara T."/>
            <person name="Tanaka T."/>
            <person name="Ishii S."/>
            <person name="Yamamoto J."/>
            <person name="Saito K."/>
            <person name="Kawai Y."/>
            <person name="Isono Y."/>
            <person name="Nakamura Y."/>
            <person name="Nagahari K."/>
            <person name="Murakami K."/>
            <person name="Yasuda T."/>
            <person name="Iwayanagi T."/>
            <person name="Wagatsuma M."/>
            <person name="Shiratori A."/>
            <person name="Sudo H."/>
            <person name="Hosoiri T."/>
            <person name="Kaku Y."/>
            <person name="Kodaira H."/>
            <person name="Kondo H."/>
            <person name="Sugawara M."/>
            <person name="Takahashi M."/>
            <person name="Kanda K."/>
            <person name="Yokoi T."/>
            <person name="Furuya T."/>
            <person name="Kikkawa E."/>
            <person name="Omura Y."/>
            <person name="Abe K."/>
            <person name="Kamihara K."/>
            <person name="Katsuta N."/>
            <person name="Sato K."/>
            <person name="Tanikawa M."/>
            <person name="Yamazaki M."/>
            <person name="Ninomiya K."/>
            <person name="Ishibashi T."/>
            <person name="Yamashita H."/>
            <person name="Murakawa K."/>
            <person name="Fujimori K."/>
            <person name="Tanai H."/>
            <person name="Kimata M."/>
            <person name="Watanabe M."/>
            <person name="Hiraoka S."/>
            <person name="Chiba Y."/>
            <person name="Ishida S."/>
            <person name="Ono Y."/>
            <person name="Takiguchi S."/>
            <person name="Watanabe S."/>
            <person name="Yosida M."/>
            <person name="Hotuta T."/>
            <person name="Kusano J."/>
            <person name="Kanehori K."/>
            <person name="Takahashi-Fujii A."/>
            <person name="Hara H."/>
            <person name="Tanase T.-O."/>
            <person name="Nomura Y."/>
            <person name="Togiya S."/>
            <person name="Komai F."/>
            <person name="Hara R."/>
            <person name="Takeuchi K."/>
            <person name="Arita M."/>
            <person name="Imose N."/>
            <person name="Musashino K."/>
            <person name="Yuuki H."/>
            <person name="Oshima A."/>
            <person name="Sasaki N."/>
            <person name="Aotsuka S."/>
            <person name="Yoshikawa Y."/>
            <person name="Matsunawa H."/>
            <person name="Ichihara T."/>
            <person name="Shiohata N."/>
            <person name="Sano S."/>
            <person name="Moriya S."/>
            <person name="Momiyama H."/>
            <person name="Satoh N."/>
            <person name="Takami S."/>
            <person name="Terashima Y."/>
            <person name="Suzuki O."/>
            <person name="Nakagawa S."/>
            <person name="Senoh A."/>
            <person name="Mizoguchi H."/>
            <person name="Goto Y."/>
            <person name="Shimizu F."/>
            <person name="Wakebe H."/>
            <person name="Hishigaki H."/>
            <person name="Watanabe T."/>
            <person name="Sugiyama A."/>
            <person name="Takemoto M."/>
            <person name="Kawakami B."/>
            <person name="Yamazaki M."/>
            <person name="Watanabe K."/>
            <person name="Kumagai A."/>
            <person name="Itakura S."/>
            <person name="Fukuzumi Y."/>
            <person name="Fujimori Y."/>
            <person name="Komiyama M."/>
            <person name="Tashiro H."/>
            <person name="Tanigami A."/>
            <person name="Fujiwara T."/>
            <person name="Ono T."/>
            <person name="Yamada K."/>
            <person name="Fujii Y."/>
            <person name="Ozaki K."/>
            <person name="Hirao M."/>
            <person name="Ohmori Y."/>
            <person name="Kawabata A."/>
            <person name="Hikiji T."/>
            <person name="Kobatake N."/>
            <person name="Inagaki H."/>
            <person name="Ikema Y."/>
            <person name="Okamoto S."/>
            <person name="Okitani R."/>
            <person name="Kawakami T."/>
            <person name="Noguchi S."/>
            <person name="Itoh T."/>
            <person name="Shigeta K."/>
            <person name="Senba T."/>
            <person name="Matsumura K."/>
            <person name="Nakajima Y."/>
            <person name="Mizuno T."/>
            <person name="Morinaga M."/>
            <person name="Sasaki M."/>
            <person name="Togashi T."/>
            <person name="Oyama M."/>
            <person name="Hata H."/>
            <person name="Watanabe M."/>
            <person name="Komatsu T."/>
            <person name="Mizushima-Sugano J."/>
            <person name="Satoh T."/>
            <person name="Shirai Y."/>
            <person name="Takahashi Y."/>
            <person name="Nakagawa K."/>
            <person name="Okumura K."/>
            <person name="Nagase T."/>
            <person name="Nomura N."/>
            <person name="Kikuchi H."/>
            <person name="Masuho Y."/>
            <person name="Yamashita R."/>
            <person name="Nakai K."/>
            <person name="Yada T."/>
            <person name="Nakamura Y."/>
            <person name="Ohara O."/>
            <person name="Isogai T."/>
            <person name="Sugano S."/>
        </authorList>
    </citation>
    <scope>NUCLEOTIDE SEQUENCE [LARGE SCALE MRNA]</scope>
    <source>
        <tissue>Heart</tissue>
    </source>
</reference>
<reference key="3">
    <citation type="submission" date="2005-09" db="EMBL/GenBank/DDBJ databases">
        <authorList>
            <person name="Mural R.J."/>
            <person name="Istrail S."/>
            <person name="Sutton G.G."/>
            <person name="Florea L."/>
            <person name="Halpern A.L."/>
            <person name="Mobarry C.M."/>
            <person name="Lippert R."/>
            <person name="Walenz B."/>
            <person name="Shatkay H."/>
            <person name="Dew I."/>
            <person name="Miller J.R."/>
            <person name="Flanigan M.J."/>
            <person name="Edwards N.J."/>
            <person name="Bolanos R."/>
            <person name="Fasulo D."/>
            <person name="Halldorsson B.V."/>
            <person name="Hannenhalli S."/>
            <person name="Turner R."/>
            <person name="Yooseph S."/>
            <person name="Lu F."/>
            <person name="Nusskern D.R."/>
            <person name="Shue B.C."/>
            <person name="Zheng X.H."/>
            <person name="Zhong F."/>
            <person name="Delcher A.L."/>
            <person name="Huson D.H."/>
            <person name="Kravitz S.A."/>
            <person name="Mouchard L."/>
            <person name="Reinert K."/>
            <person name="Remington K.A."/>
            <person name="Clark A.G."/>
            <person name="Waterman M.S."/>
            <person name="Eichler E.E."/>
            <person name="Adams M.D."/>
            <person name="Hunkapiller M.W."/>
            <person name="Myers E.W."/>
            <person name="Venter J.C."/>
        </authorList>
    </citation>
    <scope>NUCLEOTIDE SEQUENCE [LARGE SCALE GENOMIC DNA]</scope>
</reference>
<reference key="4">
    <citation type="journal article" date="2004" name="Genome Res.">
        <title>The status, quality, and expansion of the NIH full-length cDNA project: the Mammalian Gene Collection (MGC).</title>
        <authorList>
            <consortium name="The MGC Project Team"/>
        </authorList>
    </citation>
    <scope>NUCLEOTIDE SEQUENCE [LARGE SCALE MRNA] OF 32-489</scope>
    <source>
        <tissue>Testis</tissue>
    </source>
</reference>
<reference key="5">
    <citation type="journal article" date="2006" name="Nat. Biotechnol.">
        <title>A probability-based approach for high-throughput protein phosphorylation analysis and site localization.</title>
        <authorList>
            <person name="Beausoleil S.A."/>
            <person name="Villen J."/>
            <person name="Gerber S.A."/>
            <person name="Rush J."/>
            <person name="Gygi S.P."/>
        </authorList>
    </citation>
    <scope>IDENTIFICATION BY MASS SPECTROMETRY [LARGE SCALE ANALYSIS]</scope>
    <source>
        <tissue>Cervix carcinoma</tissue>
    </source>
</reference>
<reference key="6">
    <citation type="journal article" date="2007" name="Mol. Cell. Proteomics">
        <title>Quantitative phosphoproteome profiling of Wnt3a-mediated signaling network: indicating the involvement of ribonucleoside-diphosphate reductase M2 subunit phosphorylation at residue serine 20 in canonical Wnt signal transduction.</title>
        <authorList>
            <person name="Tang L.-Y."/>
            <person name="Deng N."/>
            <person name="Wang L.-S."/>
            <person name="Dai J."/>
            <person name="Wang Z.-L."/>
            <person name="Jiang X.-S."/>
            <person name="Li S.-J."/>
            <person name="Li L."/>
            <person name="Sheng Q.-H."/>
            <person name="Wu D.-Q."/>
            <person name="Li L."/>
            <person name="Zeng R."/>
        </authorList>
    </citation>
    <scope>PHOSPHORYLATION [LARGE SCALE ANALYSIS] AT SER-288</scope>
    <scope>IDENTIFICATION BY MASS SPECTROMETRY [LARGE SCALE ANALYSIS]</scope>
    <source>
        <tissue>Embryonic kidney</tissue>
    </source>
</reference>
<reference key="7">
    <citation type="journal article" date="2007" name="Science">
        <title>ATM and ATR substrate analysis reveals extensive protein networks responsive to DNA damage.</title>
        <authorList>
            <person name="Matsuoka S."/>
            <person name="Ballif B.A."/>
            <person name="Smogorzewska A."/>
            <person name="McDonald E.R. III"/>
            <person name="Hurov K.E."/>
            <person name="Luo J."/>
            <person name="Bakalarski C.E."/>
            <person name="Zhao Z."/>
            <person name="Solimini N."/>
            <person name="Lerenthal Y."/>
            <person name="Shiloh Y."/>
            <person name="Gygi S.P."/>
            <person name="Elledge S.J."/>
        </authorList>
    </citation>
    <scope>IDENTIFICATION BY MASS SPECTROMETRY [LARGE SCALE ANALYSIS]</scope>
    <source>
        <tissue>Embryonic kidney</tissue>
    </source>
</reference>
<reference key="8">
    <citation type="journal article" date="2008" name="J. Proteome Res.">
        <title>Combining protein-based IMAC, peptide-based IMAC, and MudPIT for efficient phosphoproteomic analysis.</title>
        <authorList>
            <person name="Cantin G.T."/>
            <person name="Yi W."/>
            <person name="Lu B."/>
            <person name="Park S.K."/>
            <person name="Xu T."/>
            <person name="Lee J.-D."/>
            <person name="Yates J.R. III"/>
        </authorList>
    </citation>
    <scope>PHOSPHORYLATION [LARGE SCALE ANALYSIS] AT SER-288</scope>
    <scope>IDENTIFICATION BY MASS SPECTROMETRY [LARGE SCALE ANALYSIS]</scope>
    <source>
        <tissue>Cervix carcinoma</tissue>
    </source>
</reference>
<reference key="9">
    <citation type="journal article" date="2008" name="Proc. Natl. Acad. Sci. U.S.A.">
        <title>A quantitative atlas of mitotic phosphorylation.</title>
        <authorList>
            <person name="Dephoure N."/>
            <person name="Zhou C."/>
            <person name="Villen J."/>
            <person name="Beausoleil S.A."/>
            <person name="Bakalarski C.E."/>
            <person name="Elledge S.J."/>
            <person name="Gygi S.P."/>
        </authorList>
    </citation>
    <scope>PHOSPHORYLATION [LARGE SCALE ANALYSIS] AT SER-278 AND SER-288</scope>
    <scope>IDENTIFICATION BY MASS SPECTROMETRY [LARGE SCALE ANALYSIS]</scope>
    <source>
        <tissue>Cervix carcinoma</tissue>
    </source>
</reference>
<reference key="10">
    <citation type="journal article" date="2009" name="Anal. Chem.">
        <title>Lys-N and trypsin cover complementary parts of the phosphoproteome in a refined SCX-based approach.</title>
        <authorList>
            <person name="Gauci S."/>
            <person name="Helbig A.O."/>
            <person name="Slijper M."/>
            <person name="Krijgsveld J."/>
            <person name="Heck A.J."/>
            <person name="Mohammed S."/>
        </authorList>
    </citation>
    <scope>ACETYLATION [LARGE SCALE ANALYSIS] AT ALA-2</scope>
    <scope>CLEAVAGE OF INITIATOR METHIONINE [LARGE SCALE ANALYSIS]</scope>
    <scope>IDENTIFICATION BY MASS SPECTROMETRY [LARGE SCALE ANALYSIS]</scope>
</reference>
<reference key="11">
    <citation type="journal article" date="2009" name="Sci. Signal.">
        <title>Quantitative phosphoproteomic analysis of T cell receptor signaling reveals system-wide modulation of protein-protein interactions.</title>
        <authorList>
            <person name="Mayya V."/>
            <person name="Lundgren D.H."/>
            <person name="Hwang S.-I."/>
            <person name="Rezaul K."/>
            <person name="Wu L."/>
            <person name="Eng J.K."/>
            <person name="Rodionov V."/>
            <person name="Han D.K."/>
        </authorList>
    </citation>
    <scope>PHOSPHORYLATION [LARGE SCALE ANALYSIS] AT SER-285 AND SER-288</scope>
    <scope>IDENTIFICATION BY MASS SPECTROMETRY [LARGE SCALE ANALYSIS]</scope>
    <source>
        <tissue>Leukemic T-cell</tissue>
    </source>
</reference>
<reference key="12">
    <citation type="journal article" date="2010" name="Sci. Signal.">
        <title>Quantitative phosphoproteomics reveals widespread full phosphorylation site occupancy during mitosis.</title>
        <authorList>
            <person name="Olsen J.V."/>
            <person name="Vermeulen M."/>
            <person name="Santamaria A."/>
            <person name="Kumar C."/>
            <person name="Miller M.L."/>
            <person name="Jensen L.J."/>
            <person name="Gnad F."/>
            <person name="Cox J."/>
            <person name="Jensen T.S."/>
            <person name="Nigg E.A."/>
            <person name="Brunak S."/>
            <person name="Mann M."/>
        </authorList>
    </citation>
    <scope>PHOSPHORYLATION [LARGE SCALE ANALYSIS] AT SER-288</scope>
    <scope>IDENTIFICATION BY MASS SPECTROMETRY [LARGE SCALE ANALYSIS]</scope>
    <source>
        <tissue>Cervix carcinoma</tissue>
    </source>
</reference>
<reference key="13">
    <citation type="journal article" date="2011" name="BMC Syst. Biol.">
        <title>Initial characterization of the human central proteome.</title>
        <authorList>
            <person name="Burkard T.R."/>
            <person name="Planyavsky M."/>
            <person name="Kaupe I."/>
            <person name="Breitwieser F.P."/>
            <person name="Buerckstuemmer T."/>
            <person name="Bennett K.L."/>
            <person name="Superti-Furga G."/>
            <person name="Colinge J."/>
        </authorList>
    </citation>
    <scope>IDENTIFICATION BY MASS SPECTROMETRY [LARGE SCALE ANALYSIS]</scope>
</reference>
<reference key="14">
    <citation type="journal article" date="2011" name="Sci. Signal.">
        <title>System-wide temporal characterization of the proteome and phosphoproteome of human embryonic stem cell differentiation.</title>
        <authorList>
            <person name="Rigbolt K.T."/>
            <person name="Prokhorova T.A."/>
            <person name="Akimov V."/>
            <person name="Henningsen J."/>
            <person name="Johansen P.T."/>
            <person name="Kratchmarova I."/>
            <person name="Kassem M."/>
            <person name="Mann M."/>
            <person name="Olsen J.V."/>
            <person name="Blagoev B."/>
        </authorList>
    </citation>
    <scope>PHOSPHORYLATION [LARGE SCALE ANALYSIS] AT SER-288</scope>
    <scope>IDENTIFICATION BY MASS SPECTROMETRY [LARGE SCALE ANALYSIS]</scope>
</reference>
<reference key="15">
    <citation type="journal article" date="2012" name="BMC Biol.">
        <title>UBXN7 docks on neddylated cullin complexes using its UIM motif and causes HIF1alpha accumulation.</title>
        <authorList>
            <person name="Bandau S."/>
            <person name="Knebel A."/>
            <person name="Gage Z.O."/>
            <person name="Wood N.T."/>
            <person name="Alexandru G."/>
        </authorList>
    </citation>
    <scope>FUNCTION</scope>
    <scope>UIM MOTIF</scope>
    <scope>UBA DOMAIN</scope>
    <scope>MUTAGENESIS OF SER-288; SER-297 AND PRO-459</scope>
    <scope>INTERACTION WITH CUL2; HIF1A AND VCP</scope>
</reference>
<reference key="16">
    <citation type="journal article" date="2013" name="J. Proteome Res.">
        <title>Toward a comprehensive characterization of a human cancer cell phosphoproteome.</title>
        <authorList>
            <person name="Zhou H."/>
            <person name="Di Palma S."/>
            <person name="Preisinger C."/>
            <person name="Peng M."/>
            <person name="Polat A.N."/>
            <person name="Heck A.J."/>
            <person name="Mohammed S."/>
        </authorList>
    </citation>
    <scope>PHOSPHORYLATION [LARGE SCALE ANALYSIS] AT SER-280; SER-288 AND THR-306</scope>
    <scope>IDENTIFICATION BY MASS SPECTROMETRY [LARGE SCALE ANALYSIS]</scope>
    <source>
        <tissue>Cervix carcinoma</tissue>
        <tissue>Erythroleukemia</tissue>
    </source>
</reference>
<reference key="17">
    <citation type="journal article" date="2017" name="Nat. Struct. Mol. Biol.">
        <title>Site-specific mapping of the human SUMO proteome reveals co-modification with phosphorylation.</title>
        <authorList>
            <person name="Hendriks I.A."/>
            <person name="Lyon D."/>
            <person name="Young C."/>
            <person name="Jensen L.J."/>
            <person name="Vertegaal A.C."/>
            <person name="Nielsen M.L."/>
        </authorList>
    </citation>
    <scope>SUMOYLATION [LARGE SCALE ANALYSIS] AT LYS-84 AND LYS-134</scope>
    <scope>IDENTIFICATION BY MASS SPECTROMETRY [LARGE SCALE ANALYSIS]</scope>
</reference>
<reference key="18">
    <citation type="submission" date="2004-11" db="PDB data bank">
        <title>Solution structure of the UBX domain of KIAA0794 protein.</title>
        <authorList>
            <consortium name="RIKEN structural genomics initiative (RSGI)"/>
        </authorList>
    </citation>
    <scope>STRUCTURE BY NMR OF 376-487</scope>
</reference>
<reference key="19">
    <citation type="submission" date="2006-06" db="PDB data bank">
        <title>Solution structure of the novel identified UBA-like domain in the N-terminal of human FAS associated factor 1 protein.</title>
        <authorList>
            <consortium name="RIKEN structural genomics initiative (RSGI)"/>
        </authorList>
    </citation>
    <scope>STRUCTURE BY NMR OF 5-54</scope>
</reference>
<reference key="20">
    <citation type="submission" date="2006-10" db="PDB data bank">
        <title>Solution structure of the UAS domain of human UBX domain-containing protein 7.</title>
        <authorList>
            <consortium name="RIKEN structural genomics initiative (RSGI)"/>
        </authorList>
    </citation>
    <scope>STRUCTURE BY NMR OF 131-270</scope>
</reference>
<proteinExistence type="evidence at protein level"/>
<feature type="initiator methionine" description="Removed" evidence="8">
    <location>
        <position position="1"/>
    </location>
</feature>
<feature type="chain" id="PRO_0000211035" description="UBX domain-containing protein 7">
    <location>
        <begin position="2"/>
        <end position="489"/>
    </location>
</feature>
<feature type="domain" description="UBA">
    <location>
        <begin position="2"/>
        <end position="54"/>
    </location>
</feature>
<feature type="domain" description="UIM">
    <location>
        <begin position="285"/>
        <end position="304"/>
    </location>
</feature>
<feature type="domain" description="UBX" evidence="1">
    <location>
        <begin position="408"/>
        <end position="485"/>
    </location>
</feature>
<feature type="region of interest" description="Disordered" evidence="2">
    <location>
        <begin position="56"/>
        <end position="77"/>
    </location>
</feature>
<feature type="region of interest" description="Disordered" evidence="2">
    <location>
        <begin position="300"/>
        <end position="384"/>
    </location>
</feature>
<feature type="compositionally biased region" description="Polar residues" evidence="2">
    <location>
        <begin position="59"/>
        <end position="70"/>
    </location>
</feature>
<feature type="compositionally biased region" description="Polar residues" evidence="2">
    <location>
        <begin position="300"/>
        <end position="309"/>
    </location>
</feature>
<feature type="compositionally biased region" description="Basic and acidic residues" evidence="2">
    <location>
        <begin position="352"/>
        <end position="366"/>
    </location>
</feature>
<feature type="modified residue" description="N-acetylalanine" evidence="8">
    <location>
        <position position="2"/>
    </location>
</feature>
<feature type="modified residue" description="Phosphoserine" evidence="7">
    <location>
        <position position="278"/>
    </location>
</feature>
<feature type="modified residue" description="Phosphoserine" evidence="12">
    <location>
        <position position="280"/>
    </location>
</feature>
<feature type="modified residue" description="Phosphoserine" evidence="9">
    <location>
        <position position="285"/>
    </location>
</feature>
<feature type="modified residue" description="Phosphoserine" evidence="5 6 7 9 10 11 12">
    <location>
        <position position="288"/>
    </location>
</feature>
<feature type="modified residue" description="Phosphothreonine" evidence="12">
    <location>
        <position position="306"/>
    </location>
</feature>
<feature type="cross-link" description="Glycyl lysine isopeptide (Lys-Gly) (interchain with G-Cter in SUMO2)" evidence="13">
    <location>
        <position position="84"/>
    </location>
</feature>
<feature type="cross-link" description="Glycyl lysine isopeptide (Lys-Gly) (interchain with G-Cter in ubiquitin)">
    <location>
        <position position="99"/>
    </location>
</feature>
<feature type="cross-link" description="Glycyl lysine isopeptide (Lys-Gly) (interchain with G-Cter in SUMO2)" evidence="13">
    <location>
        <position position="134"/>
    </location>
</feature>
<feature type="mutagenesis site" description="No effect on interactions with CUL2 and HIF1A." evidence="3">
    <original>S</original>
    <variation>A</variation>
    <variation>D</variation>
    <location>
        <position position="288"/>
    </location>
</feature>
<feature type="mutagenesis site" description="Severely reduces interaction with neddylated CUL2." evidence="3">
    <original>S</original>
    <variation>A</variation>
    <variation>H</variation>
    <location>
        <position position="297"/>
    </location>
</feature>
<feature type="mutagenesis site" description="Abolishes interaction with VCP/p97." evidence="3">
    <original>P</original>
    <variation>G</variation>
    <location>
        <position position="459"/>
    </location>
</feature>
<feature type="helix" evidence="15">
    <location>
        <begin position="11"/>
        <end position="23"/>
    </location>
</feature>
<feature type="helix" evidence="15">
    <location>
        <begin position="28"/>
        <end position="36"/>
    </location>
</feature>
<feature type="turn" evidence="15">
    <location>
        <begin position="37"/>
        <end position="39"/>
    </location>
</feature>
<feature type="helix" evidence="15">
    <location>
        <begin position="42"/>
        <end position="51"/>
    </location>
</feature>
<feature type="turn" evidence="16">
    <location>
        <begin position="146"/>
        <end position="148"/>
    </location>
</feature>
<feature type="helix" evidence="16">
    <location>
        <begin position="154"/>
        <end position="164"/>
    </location>
</feature>
<feature type="strand" evidence="16">
    <location>
        <begin position="167"/>
        <end position="173"/>
    </location>
</feature>
<feature type="turn" evidence="16">
    <location>
        <begin position="177"/>
        <end position="179"/>
    </location>
</feature>
<feature type="helix" evidence="16">
    <location>
        <begin position="180"/>
        <end position="186"/>
    </location>
</feature>
<feature type="turn" evidence="16">
    <location>
        <begin position="187"/>
        <end position="189"/>
    </location>
</feature>
<feature type="helix" evidence="16">
    <location>
        <begin position="191"/>
        <end position="199"/>
    </location>
</feature>
<feature type="strand" evidence="16">
    <location>
        <begin position="201"/>
        <end position="210"/>
    </location>
</feature>
<feature type="helix" evidence="16">
    <location>
        <begin position="211"/>
        <end position="220"/>
    </location>
</feature>
<feature type="strand" evidence="16">
    <location>
        <begin position="224"/>
        <end position="231"/>
    </location>
</feature>
<feature type="turn" evidence="16">
    <location>
        <begin position="233"/>
        <end position="235"/>
    </location>
</feature>
<feature type="strand" evidence="16">
    <location>
        <begin position="240"/>
        <end position="244"/>
    </location>
</feature>
<feature type="helix" evidence="16">
    <location>
        <begin position="247"/>
        <end position="260"/>
    </location>
</feature>
<feature type="strand" evidence="17">
    <location>
        <begin position="412"/>
        <end position="418"/>
    </location>
</feature>
<feature type="strand" evidence="17">
    <location>
        <begin position="424"/>
        <end position="430"/>
    </location>
</feature>
<feature type="helix" evidence="17">
    <location>
        <begin position="435"/>
        <end position="444"/>
    </location>
</feature>
<feature type="turn" evidence="17">
    <location>
        <begin position="449"/>
        <end position="451"/>
    </location>
</feature>
<feature type="strand" evidence="17">
    <location>
        <begin position="452"/>
        <end position="456"/>
    </location>
</feature>
<feature type="turn" evidence="17">
    <location>
        <begin position="457"/>
        <end position="460"/>
    </location>
</feature>
<feature type="helix" evidence="17">
    <location>
        <begin position="463"/>
        <end position="465"/>
    </location>
</feature>
<feature type="strand" evidence="14">
    <location>
        <begin position="468"/>
        <end position="470"/>
    </location>
</feature>
<feature type="helix" evidence="17">
    <location>
        <begin position="472"/>
        <end position="475"/>
    </location>
</feature>
<feature type="strand" evidence="17">
    <location>
        <begin position="479"/>
        <end position="487"/>
    </location>
</feature>
<comment type="function">
    <text evidence="3">Ubiquitin-binding adapter that links a subset of NEDD8-associated cullin ring ligases (CRLs) to the segregase VCP/p97, to regulate turnover of their ubiquitination substrates.</text>
</comment>
<comment type="subunit">
    <text evidence="3">Interacts with neddylated CUL2, ubiquitinated HIF1A, and VCP/p97.</text>
</comment>
<comment type="interaction">
    <interactant intactId="EBI-1993627">
        <id>O94888</id>
    </interactant>
    <interactant intactId="EBI-12192919">
        <id>Q6UXS0</id>
        <label>CLEC19A</label>
    </interactant>
    <organismsDiffer>false</organismsDiffer>
    <experiments>3</experiments>
</comment>
<comment type="interaction">
    <interactant intactId="EBI-1993627">
        <id>O94888</id>
    </interactant>
    <interactant intactId="EBI-748171">
        <id>O43186</id>
        <label>CRX</label>
    </interactant>
    <organismsDiffer>false</organismsDiffer>
    <experiments>3</experiments>
</comment>
<comment type="interaction">
    <interactant intactId="EBI-1993627">
        <id>O94888</id>
    </interactant>
    <interactant intactId="EBI-359390">
        <id>Q13616</id>
        <label>CUL1</label>
    </interactant>
    <organismsDiffer>false</organismsDiffer>
    <experiments>8</experiments>
</comment>
<comment type="interaction">
    <interactant intactId="EBI-1993627">
        <id>O94888</id>
    </interactant>
    <interactant intactId="EBI-456179">
        <id>Q13617</id>
        <label>CUL2</label>
    </interactant>
    <organismsDiffer>false</organismsDiffer>
    <experiments>20</experiments>
</comment>
<comment type="interaction">
    <interactant intactId="EBI-1993627">
        <id>O94888</id>
    </interactant>
    <interactant intactId="EBI-456129">
        <id>Q13618</id>
        <label>CUL3</label>
    </interactant>
    <organismsDiffer>false</organismsDiffer>
    <experiments>6</experiments>
</comment>
<comment type="interaction">
    <interactant intactId="EBI-1993627">
        <id>O94888</id>
    </interactant>
    <interactant intactId="EBI-456106">
        <id>Q13619</id>
        <label>CUL4A</label>
    </interactant>
    <organismsDiffer>false</organismsDiffer>
    <experiments>7</experiments>
</comment>
<comment type="interaction">
    <interactant intactId="EBI-1993627">
        <id>O94888</id>
    </interactant>
    <interactant intactId="EBI-456067">
        <id>Q13620</id>
        <label>CUL4B</label>
    </interactant>
    <organismsDiffer>false</organismsDiffer>
    <experiments>3</experiments>
</comment>
<comment type="interaction">
    <interactant intactId="EBI-1993627">
        <id>O94888</id>
    </interactant>
    <interactant intactId="EBI-3867333">
        <id>A8MQ03</id>
        <label>CYSRT1</label>
    </interactant>
    <organismsDiffer>false</organismsDiffer>
    <experiments>3</experiments>
</comment>
<comment type="interaction">
    <interactant intactId="EBI-1993627">
        <id>O94888</id>
    </interactant>
    <interactant intactId="EBI-724310">
        <id>Q15038</id>
        <label>DAZAP2</label>
    </interactant>
    <organismsDiffer>false</organismsDiffer>
    <experiments>3</experiments>
</comment>
<comment type="interaction">
    <interactant intactId="EBI-1993627">
        <id>O94888</id>
    </interactant>
    <interactant intactId="EBI-11978259">
        <id>Q92567-2</id>
        <label>FAM168A</label>
    </interactant>
    <organismsDiffer>false</organismsDiffer>
    <experiments>3</experiments>
</comment>
<comment type="interaction">
    <interactant intactId="EBI-1993627">
        <id>O94888</id>
    </interactant>
    <interactant intactId="EBI-447269">
        <id>Q16665</id>
        <label>HIF1A</label>
    </interactant>
    <organismsDiffer>false</organismsDiffer>
    <experiments>3</experiments>
</comment>
<comment type="interaction">
    <interactant intactId="EBI-1993627">
        <id>O94888</id>
    </interactant>
    <interactant intactId="EBI-2864512">
        <id>P50221</id>
        <label>MEOX1</label>
    </interactant>
    <organismsDiffer>false</organismsDiffer>
    <experiments>3</experiments>
</comment>
<comment type="interaction">
    <interactant intactId="EBI-1993627">
        <id>O94888</id>
    </interactant>
    <interactant intactId="EBI-716247">
        <id>Q15843</id>
        <label>NEDD8</label>
    </interactant>
    <organismsDiffer>false</organismsDiffer>
    <experiments>2</experiments>
</comment>
<comment type="interaction">
    <interactant intactId="EBI-1993627">
        <id>O94888</id>
    </interactant>
    <interactant intactId="EBI-11956831">
        <id>Q13952-2</id>
        <label>NFYC</label>
    </interactant>
    <organismsDiffer>false</organismsDiffer>
    <experiments>3</experiments>
</comment>
<comment type="interaction">
    <interactant intactId="EBI-1993627">
        <id>O94888</id>
    </interactant>
    <interactant intactId="EBI-296331">
        <id>Q02548</id>
        <label>PAX5</label>
    </interactant>
    <organismsDiffer>false</organismsDiffer>
    <experiments>3</experiments>
</comment>
<comment type="interaction">
    <interactant intactId="EBI-1993627">
        <id>O94888</id>
    </interactant>
    <interactant intactId="EBI-747278">
        <id>P26367</id>
        <label>PAX6</label>
    </interactant>
    <organismsDiffer>false</organismsDiffer>
    <experiments>3</experiments>
</comment>
<comment type="interaction">
    <interactant intactId="EBI-1993627">
        <id>O94888</id>
    </interactant>
    <interactant intactId="EBI-10829018">
        <id>Q04864-2</id>
        <label>REL</label>
    </interactant>
    <organismsDiffer>false</organismsDiffer>
    <experiments>3</experiments>
</comment>
<comment type="interaction">
    <interactant intactId="EBI-1993627">
        <id>O94888</id>
    </interactant>
    <interactant intactId="EBI-359276">
        <id>Q9Y4K3</id>
        <label>TRAF6</label>
    </interactant>
    <organismsDiffer>false</organismsDiffer>
    <experiments>3</experiments>
</comment>
<comment type="interaction">
    <interactant intactId="EBI-1993627">
        <id>O94888</id>
    </interactant>
    <interactant intactId="EBI-11523450">
        <id>Q9HCM9-2</id>
        <label>TRIM39</label>
    </interactant>
    <organismsDiffer>false</organismsDiffer>
    <experiments>3</experiments>
</comment>
<comment type="interaction">
    <interactant intactId="EBI-1993627">
        <id>O94888</id>
    </interactant>
    <interactant intactId="EBI-6929619">
        <id>Q9BVG3</id>
        <label>TRIM62</label>
    </interactant>
    <organismsDiffer>false</organismsDiffer>
    <experiments>3</experiments>
</comment>
<comment type="interaction">
    <interactant intactId="EBI-1993627">
        <id>O94888</id>
    </interactant>
    <interactant intactId="EBI-2340370">
        <id>Q9BZR9</id>
        <label>TRIM8</label>
    </interactant>
    <organismsDiffer>false</organismsDiffer>
    <experiments>3</experiments>
</comment>
<comment type="interaction">
    <interactant intactId="EBI-1993627">
        <id>O94888</id>
    </interactant>
    <interactant intactId="EBI-741480">
        <id>Q9UMX0</id>
        <label>UBQLN1</label>
    </interactant>
    <organismsDiffer>false</organismsDiffer>
    <experiments>3</experiments>
</comment>
<comment type="interaction">
    <interactant intactId="EBI-1993627">
        <id>O94888</id>
    </interactant>
    <interactant intactId="EBI-947187">
        <id>Q9UHD9</id>
        <label>UBQLN2</label>
    </interactant>
    <organismsDiffer>false</organismsDiffer>
    <experiments>3</experiments>
</comment>
<comment type="interaction">
    <interactant intactId="EBI-1993627">
        <id>O94888</id>
    </interactant>
    <interactant intactId="EBI-355164">
        <id>P55072</id>
        <label>VCP</label>
    </interactant>
    <organismsDiffer>false</organismsDiffer>
    <experiments>19</experiments>
</comment>
<comment type="interaction">
    <interactant intactId="EBI-1993627">
        <id>O94888</id>
    </interactant>
    <interactant intactId="EBI-2129250">
        <id>Q8ND25</id>
        <label>ZNRF1</label>
    </interactant>
    <organismsDiffer>false</organismsDiffer>
    <experiments>5</experiments>
</comment>
<comment type="interaction">
    <interactant intactId="EBI-1993627">
        <id>O94888</id>
    </interactant>
    <interactant intactId="EBI-1551052">
        <id>Q9WTX6</id>
        <label>Cul1</label>
    </interactant>
    <organismsDiffer>true</organismsDiffer>
    <experiments>3</experiments>
</comment>
<comment type="subcellular location">
    <subcellularLocation>
        <location evidence="3">Nucleus</location>
    </subcellularLocation>
</comment>
<comment type="domain">
    <text evidence="3">The UIM (ubiquitin-interacting motif) is required to engage the NEDD8 modification on cullins.</text>
</comment>
<comment type="domain">
    <text evidence="3">The UBX domain mediates interaction with VCP/p97.</text>
</comment>
<comment type="domain">
    <text evidence="3">The UBA domain is required for binding ubiquitinated-protein substrates.</text>
</comment>
<comment type="sequence caution" evidence="4">
    <conflict type="erroneous initiation">
        <sequence resource="EMBL-CDS" id="BAA34514"/>
    </conflict>
</comment>
<comment type="sequence caution" evidence="4">
    <conflict type="miscellaneous discrepancy">
        <sequence resource="EMBL-CDS" id="BAC85247"/>
    </conflict>
    <text>Unlikely isoform. Aberrant splice sites.</text>
</comment>